<organism>
    <name type="scientific">Brucella abortus biovar 1 (strain 9-941)</name>
    <dbReference type="NCBI Taxonomy" id="262698"/>
    <lineage>
        <taxon>Bacteria</taxon>
        <taxon>Pseudomonadati</taxon>
        <taxon>Pseudomonadota</taxon>
        <taxon>Alphaproteobacteria</taxon>
        <taxon>Hyphomicrobiales</taxon>
        <taxon>Brucellaceae</taxon>
        <taxon>Brucella/Ochrobactrum group</taxon>
        <taxon>Brucella</taxon>
    </lineage>
</organism>
<proteinExistence type="inferred from homology"/>
<protein>
    <recommendedName>
        <fullName evidence="1">Large ribosomal subunit protein bL32</fullName>
    </recommendedName>
    <alternativeName>
        <fullName evidence="3">50S ribosomal protein L32</fullName>
    </alternativeName>
</protein>
<name>RL32_BRUAB</name>
<gene>
    <name evidence="1" type="primary">rpmF</name>
    <name type="ordered locus">BruAb1_1758</name>
</gene>
<accession>Q57BA8</accession>
<keyword id="KW-0687">Ribonucleoprotein</keyword>
<keyword id="KW-0689">Ribosomal protein</keyword>
<dbReference type="EMBL" id="AE017223">
    <property type="protein sequence ID" value="AAX75076.1"/>
    <property type="molecule type" value="Genomic_DNA"/>
</dbReference>
<dbReference type="RefSeq" id="WP_002964856.1">
    <property type="nucleotide sequence ID" value="NC_006932.1"/>
</dbReference>
<dbReference type="SMR" id="Q57BA8"/>
<dbReference type="EnsemblBacteria" id="AAX75076">
    <property type="protein sequence ID" value="AAX75076"/>
    <property type="gene ID" value="BruAb1_1758"/>
</dbReference>
<dbReference type="GeneID" id="97533091"/>
<dbReference type="KEGG" id="bmb:BruAb1_1758"/>
<dbReference type="HOGENOM" id="CLU_129084_2_2_5"/>
<dbReference type="Proteomes" id="UP000000540">
    <property type="component" value="Chromosome I"/>
</dbReference>
<dbReference type="GO" id="GO:0015934">
    <property type="term" value="C:large ribosomal subunit"/>
    <property type="evidence" value="ECO:0007669"/>
    <property type="project" value="InterPro"/>
</dbReference>
<dbReference type="GO" id="GO:0003735">
    <property type="term" value="F:structural constituent of ribosome"/>
    <property type="evidence" value="ECO:0007669"/>
    <property type="project" value="InterPro"/>
</dbReference>
<dbReference type="GO" id="GO:0006412">
    <property type="term" value="P:translation"/>
    <property type="evidence" value="ECO:0007669"/>
    <property type="project" value="UniProtKB-UniRule"/>
</dbReference>
<dbReference type="Gene3D" id="1.20.5.640">
    <property type="entry name" value="Single helix bin"/>
    <property type="match status" value="1"/>
</dbReference>
<dbReference type="HAMAP" id="MF_00340">
    <property type="entry name" value="Ribosomal_bL32"/>
    <property type="match status" value="1"/>
</dbReference>
<dbReference type="InterPro" id="IPR002677">
    <property type="entry name" value="Ribosomal_bL32"/>
</dbReference>
<dbReference type="InterPro" id="IPR044957">
    <property type="entry name" value="Ribosomal_bL32_bact"/>
</dbReference>
<dbReference type="InterPro" id="IPR011332">
    <property type="entry name" value="Ribosomal_zn-bd"/>
</dbReference>
<dbReference type="NCBIfam" id="TIGR01031">
    <property type="entry name" value="rpmF_bact"/>
    <property type="match status" value="1"/>
</dbReference>
<dbReference type="PANTHER" id="PTHR35534">
    <property type="entry name" value="50S RIBOSOMAL PROTEIN L32"/>
    <property type="match status" value="1"/>
</dbReference>
<dbReference type="PANTHER" id="PTHR35534:SF1">
    <property type="entry name" value="LARGE RIBOSOMAL SUBUNIT PROTEIN BL32"/>
    <property type="match status" value="1"/>
</dbReference>
<dbReference type="Pfam" id="PF01783">
    <property type="entry name" value="Ribosomal_L32p"/>
    <property type="match status" value="1"/>
</dbReference>
<dbReference type="SUPFAM" id="SSF57829">
    <property type="entry name" value="Zn-binding ribosomal proteins"/>
    <property type="match status" value="1"/>
</dbReference>
<feature type="chain" id="PRO_0000225707" description="Large ribosomal subunit protein bL32">
    <location>
        <begin position="1"/>
        <end position="59"/>
    </location>
</feature>
<feature type="region of interest" description="Disordered" evidence="2">
    <location>
        <begin position="1"/>
        <end position="59"/>
    </location>
</feature>
<feature type="compositionally biased region" description="Basic residues" evidence="2">
    <location>
        <begin position="1"/>
        <end position="16"/>
    </location>
</feature>
<feature type="compositionally biased region" description="Basic and acidic residues" evidence="2">
    <location>
        <begin position="28"/>
        <end position="44"/>
    </location>
</feature>
<reference key="1">
    <citation type="journal article" date="2005" name="J. Bacteriol.">
        <title>Completion of the genome sequence of Brucella abortus and comparison to the highly similar genomes of Brucella melitensis and Brucella suis.</title>
        <authorList>
            <person name="Halling S.M."/>
            <person name="Peterson-Burch B.D."/>
            <person name="Bricker B.J."/>
            <person name="Zuerner R.L."/>
            <person name="Qing Z."/>
            <person name="Li L.-L."/>
            <person name="Kapur V."/>
            <person name="Alt D.P."/>
            <person name="Olsen S.C."/>
        </authorList>
    </citation>
    <scope>NUCLEOTIDE SEQUENCE [LARGE SCALE GENOMIC DNA]</scope>
    <source>
        <strain>9-941</strain>
    </source>
</reference>
<sequence length="59" mass="6790">MAVPKRKTSPSRRGMRRSADALKAPTYVEDKNSGELRRPHHIDLKSGMYRGRQVLEPKE</sequence>
<comment type="similarity">
    <text evidence="1">Belongs to the bacterial ribosomal protein bL32 family.</text>
</comment>
<evidence type="ECO:0000255" key="1">
    <source>
        <dbReference type="HAMAP-Rule" id="MF_00340"/>
    </source>
</evidence>
<evidence type="ECO:0000256" key="2">
    <source>
        <dbReference type="SAM" id="MobiDB-lite"/>
    </source>
</evidence>
<evidence type="ECO:0000305" key="3"/>